<proteinExistence type="inferred from homology"/>
<evidence type="ECO:0000255" key="1">
    <source>
        <dbReference type="HAMAP-Rule" id="MF_01347"/>
    </source>
</evidence>
<dbReference type="EC" id="7.1.2.2" evidence="1"/>
<dbReference type="EMBL" id="CP000655">
    <property type="protein sequence ID" value="ABP33248.1"/>
    <property type="molecule type" value="Genomic_DNA"/>
</dbReference>
<dbReference type="RefSeq" id="WP_011901874.1">
    <property type="nucleotide sequence ID" value="NC_009379.1"/>
</dbReference>
<dbReference type="SMR" id="A4SUT4"/>
<dbReference type="GeneID" id="31480362"/>
<dbReference type="KEGG" id="pnu:Pnuc_0026"/>
<dbReference type="eggNOG" id="COG0055">
    <property type="taxonomic scope" value="Bacteria"/>
</dbReference>
<dbReference type="HOGENOM" id="CLU_022398_0_2_4"/>
<dbReference type="Proteomes" id="UP000000231">
    <property type="component" value="Chromosome"/>
</dbReference>
<dbReference type="GO" id="GO:0005886">
    <property type="term" value="C:plasma membrane"/>
    <property type="evidence" value="ECO:0007669"/>
    <property type="project" value="UniProtKB-SubCell"/>
</dbReference>
<dbReference type="GO" id="GO:0045259">
    <property type="term" value="C:proton-transporting ATP synthase complex"/>
    <property type="evidence" value="ECO:0007669"/>
    <property type="project" value="UniProtKB-KW"/>
</dbReference>
<dbReference type="GO" id="GO:0005524">
    <property type="term" value="F:ATP binding"/>
    <property type="evidence" value="ECO:0007669"/>
    <property type="project" value="UniProtKB-UniRule"/>
</dbReference>
<dbReference type="GO" id="GO:0016887">
    <property type="term" value="F:ATP hydrolysis activity"/>
    <property type="evidence" value="ECO:0007669"/>
    <property type="project" value="InterPro"/>
</dbReference>
<dbReference type="GO" id="GO:0046933">
    <property type="term" value="F:proton-transporting ATP synthase activity, rotational mechanism"/>
    <property type="evidence" value="ECO:0007669"/>
    <property type="project" value="UniProtKB-UniRule"/>
</dbReference>
<dbReference type="CDD" id="cd18110">
    <property type="entry name" value="ATP-synt_F1_beta_C"/>
    <property type="match status" value="1"/>
</dbReference>
<dbReference type="CDD" id="cd18115">
    <property type="entry name" value="ATP-synt_F1_beta_N"/>
    <property type="match status" value="1"/>
</dbReference>
<dbReference type="CDD" id="cd01133">
    <property type="entry name" value="F1-ATPase_beta_CD"/>
    <property type="match status" value="1"/>
</dbReference>
<dbReference type="FunFam" id="1.10.1140.10:FF:000001">
    <property type="entry name" value="ATP synthase subunit beta"/>
    <property type="match status" value="1"/>
</dbReference>
<dbReference type="FunFam" id="3.40.50.300:FF:000004">
    <property type="entry name" value="ATP synthase subunit beta"/>
    <property type="match status" value="1"/>
</dbReference>
<dbReference type="Gene3D" id="2.40.10.170">
    <property type="match status" value="1"/>
</dbReference>
<dbReference type="Gene3D" id="1.10.1140.10">
    <property type="entry name" value="Bovine Mitochondrial F1-atpase, Atp Synthase Beta Chain, Chain D, domain 3"/>
    <property type="match status" value="1"/>
</dbReference>
<dbReference type="Gene3D" id="3.40.50.300">
    <property type="entry name" value="P-loop containing nucleotide triphosphate hydrolases"/>
    <property type="match status" value="1"/>
</dbReference>
<dbReference type="HAMAP" id="MF_01347">
    <property type="entry name" value="ATP_synth_beta_bact"/>
    <property type="match status" value="1"/>
</dbReference>
<dbReference type="InterPro" id="IPR003593">
    <property type="entry name" value="AAA+_ATPase"/>
</dbReference>
<dbReference type="InterPro" id="IPR055190">
    <property type="entry name" value="ATP-synt_VA_C"/>
</dbReference>
<dbReference type="InterPro" id="IPR005722">
    <property type="entry name" value="ATP_synth_F1_bsu"/>
</dbReference>
<dbReference type="InterPro" id="IPR020003">
    <property type="entry name" value="ATPase_a/bsu_AS"/>
</dbReference>
<dbReference type="InterPro" id="IPR050053">
    <property type="entry name" value="ATPase_alpha/beta_chains"/>
</dbReference>
<dbReference type="InterPro" id="IPR004100">
    <property type="entry name" value="ATPase_F1/V1/A1_a/bsu_N"/>
</dbReference>
<dbReference type="InterPro" id="IPR036121">
    <property type="entry name" value="ATPase_F1/V1/A1_a/bsu_N_sf"/>
</dbReference>
<dbReference type="InterPro" id="IPR000194">
    <property type="entry name" value="ATPase_F1/V1/A1_a/bsu_nucl-bd"/>
</dbReference>
<dbReference type="InterPro" id="IPR024034">
    <property type="entry name" value="ATPase_F1/V1_b/a_C"/>
</dbReference>
<dbReference type="InterPro" id="IPR027417">
    <property type="entry name" value="P-loop_NTPase"/>
</dbReference>
<dbReference type="NCBIfam" id="TIGR01039">
    <property type="entry name" value="atpD"/>
    <property type="match status" value="1"/>
</dbReference>
<dbReference type="PANTHER" id="PTHR15184">
    <property type="entry name" value="ATP SYNTHASE"/>
    <property type="match status" value="1"/>
</dbReference>
<dbReference type="PANTHER" id="PTHR15184:SF71">
    <property type="entry name" value="ATP SYNTHASE SUBUNIT BETA, MITOCHONDRIAL"/>
    <property type="match status" value="1"/>
</dbReference>
<dbReference type="Pfam" id="PF00006">
    <property type="entry name" value="ATP-synt_ab"/>
    <property type="match status" value="1"/>
</dbReference>
<dbReference type="Pfam" id="PF02874">
    <property type="entry name" value="ATP-synt_ab_N"/>
    <property type="match status" value="1"/>
</dbReference>
<dbReference type="Pfam" id="PF22919">
    <property type="entry name" value="ATP-synt_VA_C"/>
    <property type="match status" value="1"/>
</dbReference>
<dbReference type="SMART" id="SM00382">
    <property type="entry name" value="AAA"/>
    <property type="match status" value="1"/>
</dbReference>
<dbReference type="SUPFAM" id="SSF47917">
    <property type="entry name" value="C-terminal domain of alpha and beta subunits of F1 ATP synthase"/>
    <property type="match status" value="1"/>
</dbReference>
<dbReference type="SUPFAM" id="SSF50615">
    <property type="entry name" value="N-terminal domain of alpha and beta subunits of F1 ATP synthase"/>
    <property type="match status" value="1"/>
</dbReference>
<dbReference type="SUPFAM" id="SSF52540">
    <property type="entry name" value="P-loop containing nucleoside triphosphate hydrolases"/>
    <property type="match status" value="1"/>
</dbReference>
<dbReference type="PROSITE" id="PS00152">
    <property type="entry name" value="ATPASE_ALPHA_BETA"/>
    <property type="match status" value="1"/>
</dbReference>
<organism>
    <name type="scientific">Polynucleobacter asymbioticus (strain DSM 18221 / CIP 109841 / QLW-P1DMWA-1)</name>
    <name type="common">Polynucleobacter necessarius subsp. asymbioticus</name>
    <dbReference type="NCBI Taxonomy" id="312153"/>
    <lineage>
        <taxon>Bacteria</taxon>
        <taxon>Pseudomonadati</taxon>
        <taxon>Pseudomonadota</taxon>
        <taxon>Betaproteobacteria</taxon>
        <taxon>Burkholderiales</taxon>
        <taxon>Burkholderiaceae</taxon>
        <taxon>Polynucleobacter</taxon>
    </lineage>
</organism>
<accession>A4SUT4</accession>
<sequence>MSNGNIVQCIGPVVDIQFPRDKMPNIYDALTLVESGEKSFAEKGLTFEVQQQIGDGVVRAIAMGASDGLRRGMEVKSTGKPISVPVGPATLGRIMDVLGRPIDDAGPIATEERRAIHQPAPKFDELSPSVDLLETGIKVIDLVCPFAKGGKVGLFGGAGVGKTVNMMELINNIAKQHSGLSVFAGVGERTREGNDFYHEMKESNVIDKVAMVFGQMNEPPGNRLRVALTGLTMAEAFRDEGRDILFFVDNIYRYTLAGTEVSALLGRMPSAVGYQPTLAEEMGKLQERITSTKTGSVTSIQAVYVPADDLTDPSPATTFLHLDSTVVLSRDIAALGIYPAVDPLDSTSRQLDPQVVGQEHYEVARDVQMTLQRYKELRDIIAILGMDELSPEDKLAVSRARKIQRFLSQPFHVAEVFTGSPGKYVPLKETIRGFKMICSGELDHLPEQAFYMVGSIDEAIEKAKKL</sequence>
<feature type="chain" id="PRO_1000086915" description="ATP synthase subunit beta">
    <location>
        <begin position="1"/>
        <end position="466"/>
    </location>
</feature>
<feature type="binding site" evidence="1">
    <location>
        <begin position="156"/>
        <end position="163"/>
    </location>
    <ligand>
        <name>ATP</name>
        <dbReference type="ChEBI" id="CHEBI:30616"/>
    </ligand>
</feature>
<name>ATPB_POLAQ</name>
<gene>
    <name evidence="1" type="primary">atpD</name>
    <name type="ordered locus">Pnuc_0026</name>
</gene>
<protein>
    <recommendedName>
        <fullName evidence="1">ATP synthase subunit beta</fullName>
        <ecNumber evidence="1">7.1.2.2</ecNumber>
    </recommendedName>
    <alternativeName>
        <fullName evidence="1">ATP synthase F1 sector subunit beta</fullName>
    </alternativeName>
    <alternativeName>
        <fullName evidence="1">F-ATPase subunit beta</fullName>
    </alternativeName>
</protein>
<comment type="function">
    <text evidence="1">Produces ATP from ADP in the presence of a proton gradient across the membrane. The catalytic sites are hosted primarily by the beta subunits.</text>
</comment>
<comment type="catalytic activity">
    <reaction evidence="1">
        <text>ATP + H2O + 4 H(+)(in) = ADP + phosphate + 5 H(+)(out)</text>
        <dbReference type="Rhea" id="RHEA:57720"/>
        <dbReference type="ChEBI" id="CHEBI:15377"/>
        <dbReference type="ChEBI" id="CHEBI:15378"/>
        <dbReference type="ChEBI" id="CHEBI:30616"/>
        <dbReference type="ChEBI" id="CHEBI:43474"/>
        <dbReference type="ChEBI" id="CHEBI:456216"/>
        <dbReference type="EC" id="7.1.2.2"/>
    </reaction>
</comment>
<comment type="subunit">
    <text evidence="1">F-type ATPases have 2 components, CF(1) - the catalytic core - and CF(0) - the membrane proton channel. CF(1) has five subunits: alpha(3), beta(3), gamma(1), delta(1), epsilon(1). CF(0) has three main subunits: a(1), b(2) and c(9-12). The alpha and beta chains form an alternating ring which encloses part of the gamma chain. CF(1) is attached to CF(0) by a central stalk formed by the gamma and epsilon chains, while a peripheral stalk is formed by the delta and b chains.</text>
</comment>
<comment type="subcellular location">
    <subcellularLocation>
        <location evidence="1">Cell membrane</location>
        <topology evidence="1">Peripheral membrane protein</topology>
    </subcellularLocation>
</comment>
<comment type="similarity">
    <text evidence="1">Belongs to the ATPase alpha/beta chains family.</text>
</comment>
<reference key="1">
    <citation type="journal article" date="2012" name="Stand. Genomic Sci.">
        <title>Complete genome sequence of Polynucleobacter necessarius subsp. asymbioticus type strain (QLW-P1DMWA-1(T)).</title>
        <authorList>
            <person name="Meincke L."/>
            <person name="Copeland A."/>
            <person name="Lapidus A."/>
            <person name="Lucas S."/>
            <person name="Berry K.W."/>
            <person name="Del Rio T.G."/>
            <person name="Hammon N."/>
            <person name="Dalin E."/>
            <person name="Tice H."/>
            <person name="Pitluck S."/>
            <person name="Richardson P."/>
            <person name="Bruce D."/>
            <person name="Goodwin L."/>
            <person name="Han C."/>
            <person name="Tapia R."/>
            <person name="Detter J.C."/>
            <person name="Schmutz J."/>
            <person name="Brettin T."/>
            <person name="Larimer F."/>
            <person name="Land M."/>
            <person name="Hauser L."/>
            <person name="Kyrpides N.C."/>
            <person name="Ivanova N."/>
            <person name="Goker M."/>
            <person name="Woyke T."/>
            <person name="Wu Q.L."/>
            <person name="Pockl M."/>
            <person name="Hahn M.W."/>
            <person name="Klenk H.P."/>
        </authorList>
    </citation>
    <scope>NUCLEOTIDE SEQUENCE [LARGE SCALE GENOMIC DNA]</scope>
    <source>
        <strain>DSM 18221 / CIP 109841 / QLW-P1DMWA-1</strain>
    </source>
</reference>
<keyword id="KW-0066">ATP synthesis</keyword>
<keyword id="KW-0067">ATP-binding</keyword>
<keyword id="KW-1003">Cell membrane</keyword>
<keyword id="KW-0139">CF(1)</keyword>
<keyword id="KW-0375">Hydrogen ion transport</keyword>
<keyword id="KW-0406">Ion transport</keyword>
<keyword id="KW-0472">Membrane</keyword>
<keyword id="KW-0547">Nucleotide-binding</keyword>
<keyword id="KW-1185">Reference proteome</keyword>
<keyword id="KW-1278">Translocase</keyword>
<keyword id="KW-0813">Transport</keyword>